<keyword id="KW-0488">Methylation</keyword>
<keyword id="KW-0496">Mitochondrion</keyword>
<keyword id="KW-0648">Protein biosynthesis</keyword>
<keyword id="KW-1185">Reference proteome</keyword>
<keyword id="KW-0809">Transit peptide</keyword>
<comment type="function">
    <text evidence="1">Mitochondrial peptide chain release factor that directs the termination of translation in response to the peptide chain termination codons UAA and UAG.</text>
</comment>
<comment type="subcellular location">
    <subcellularLocation>
        <location evidence="3">Mitochondrion</location>
    </subcellularLocation>
</comment>
<comment type="PTM">
    <text evidence="1">Methylation of glutamine in the GGQ triplet is conserved from bacteria to mammals.</text>
</comment>
<comment type="similarity">
    <text evidence="3">Belongs to the prokaryotic/mitochondrial release factor family.</text>
</comment>
<reference key="1">
    <citation type="journal article" date="1998" name="Science">
        <title>Genome sequence of the nematode C. elegans: a platform for investigating biology.</title>
        <authorList>
            <consortium name="The C. elegans sequencing consortium"/>
        </authorList>
    </citation>
    <scope>NUCLEOTIDE SEQUENCE [LARGE SCALE GENOMIC DNA]</scope>
    <source>
        <strain>Bristol N2</strain>
    </source>
</reference>
<proteinExistence type="inferred from homology"/>
<dbReference type="EMBL" id="FO080652">
    <property type="protein sequence ID" value="CCD65509.1"/>
    <property type="molecule type" value="Genomic_DNA"/>
</dbReference>
<dbReference type="PIR" id="T15102">
    <property type="entry name" value="T15102"/>
</dbReference>
<dbReference type="RefSeq" id="NP_500737.1">
    <property type="nucleotide sequence ID" value="NM_068336.6"/>
</dbReference>
<dbReference type="SMR" id="O44568"/>
<dbReference type="BioGRID" id="42419">
    <property type="interactions" value="1"/>
</dbReference>
<dbReference type="FunCoup" id="O44568">
    <property type="interactions" value="2932"/>
</dbReference>
<dbReference type="STRING" id="6239.W03F8.3a.1"/>
<dbReference type="PaxDb" id="6239-W03F8.3"/>
<dbReference type="PeptideAtlas" id="O44568"/>
<dbReference type="EnsemblMetazoa" id="W03F8.3a.1">
    <property type="protein sequence ID" value="W03F8.3a.1"/>
    <property type="gene ID" value="WBGene00020993"/>
</dbReference>
<dbReference type="UCSC" id="W03F8.3">
    <property type="organism name" value="c. elegans"/>
</dbReference>
<dbReference type="AGR" id="WB:WBGene00020993"/>
<dbReference type="WormBase" id="W03F8.3a">
    <property type="protein sequence ID" value="CE17273"/>
    <property type="gene ID" value="WBGene00020993"/>
    <property type="gene designation" value="mtrf-1L"/>
</dbReference>
<dbReference type="eggNOG" id="KOG2726">
    <property type="taxonomic scope" value="Eukaryota"/>
</dbReference>
<dbReference type="HOGENOM" id="CLU_036856_0_3_1"/>
<dbReference type="InParanoid" id="O44568"/>
<dbReference type="OMA" id="LEWEVFR"/>
<dbReference type="OrthoDB" id="2019491at2759"/>
<dbReference type="PhylomeDB" id="O44568"/>
<dbReference type="Reactome" id="R-CEL-5419276">
    <property type="pathway name" value="Mitochondrial translation termination"/>
</dbReference>
<dbReference type="PRO" id="PR:O44568"/>
<dbReference type="Proteomes" id="UP000001940">
    <property type="component" value="Chromosome IV"/>
</dbReference>
<dbReference type="Bgee" id="WBGene00020993">
    <property type="expression patterns" value="Expressed in germ line (C elegans) and 4 other cell types or tissues"/>
</dbReference>
<dbReference type="ExpressionAtlas" id="O44568">
    <property type="expression patterns" value="baseline and differential"/>
</dbReference>
<dbReference type="GO" id="GO:0005739">
    <property type="term" value="C:mitochondrion"/>
    <property type="evidence" value="ECO:0007669"/>
    <property type="project" value="UniProtKB-SubCell"/>
</dbReference>
<dbReference type="GO" id="GO:0003747">
    <property type="term" value="F:translation release factor activity"/>
    <property type="evidence" value="ECO:0007669"/>
    <property type="project" value="InterPro"/>
</dbReference>
<dbReference type="FunFam" id="3.30.160.20:FF:000100">
    <property type="entry name" value="Probable peptide chain release factor 1, mitochondrial"/>
    <property type="match status" value="1"/>
</dbReference>
<dbReference type="Gene3D" id="3.30.160.20">
    <property type="match status" value="1"/>
</dbReference>
<dbReference type="Gene3D" id="3.30.70.1660">
    <property type="match status" value="1"/>
</dbReference>
<dbReference type="InterPro" id="IPR005139">
    <property type="entry name" value="PCRF"/>
</dbReference>
<dbReference type="InterPro" id="IPR000352">
    <property type="entry name" value="Pep_chain_release_fac_I"/>
</dbReference>
<dbReference type="InterPro" id="IPR045853">
    <property type="entry name" value="Pep_chain_release_fac_I_sf"/>
</dbReference>
<dbReference type="InterPro" id="IPR050057">
    <property type="entry name" value="Prokaryotic/Mito_RF"/>
</dbReference>
<dbReference type="PANTHER" id="PTHR43804">
    <property type="entry name" value="LD18447P"/>
    <property type="match status" value="1"/>
</dbReference>
<dbReference type="PANTHER" id="PTHR43804:SF7">
    <property type="entry name" value="LD18447P"/>
    <property type="match status" value="1"/>
</dbReference>
<dbReference type="Pfam" id="PF03462">
    <property type="entry name" value="PCRF"/>
    <property type="match status" value="1"/>
</dbReference>
<dbReference type="Pfam" id="PF00472">
    <property type="entry name" value="RF-1"/>
    <property type="match status" value="1"/>
</dbReference>
<dbReference type="SMART" id="SM00937">
    <property type="entry name" value="PCRF"/>
    <property type="match status" value="1"/>
</dbReference>
<dbReference type="SUPFAM" id="SSF75620">
    <property type="entry name" value="Release factor"/>
    <property type="match status" value="1"/>
</dbReference>
<dbReference type="PROSITE" id="PS00745">
    <property type="entry name" value="RF_PROK_I"/>
    <property type="match status" value="1"/>
</dbReference>
<accession>O44568</accession>
<organism>
    <name type="scientific">Caenorhabditis elegans</name>
    <dbReference type="NCBI Taxonomy" id="6239"/>
    <lineage>
        <taxon>Eukaryota</taxon>
        <taxon>Metazoa</taxon>
        <taxon>Ecdysozoa</taxon>
        <taxon>Nematoda</taxon>
        <taxon>Chromadorea</taxon>
        <taxon>Rhabditida</taxon>
        <taxon>Rhabditina</taxon>
        <taxon>Rhabditomorpha</taxon>
        <taxon>Rhabditoidea</taxon>
        <taxon>Rhabditidae</taxon>
        <taxon>Peloderinae</taxon>
        <taxon>Caenorhabditis</taxon>
    </lineage>
</organism>
<evidence type="ECO:0000250" key="1"/>
<evidence type="ECO:0000255" key="2"/>
<evidence type="ECO:0000305" key="3"/>
<evidence type="ECO:0000312" key="4">
    <source>
        <dbReference type="WormBase" id="W03F8.3a"/>
    </source>
</evidence>
<feature type="transit peptide" description="Mitochondrion" evidence="2">
    <location>
        <begin position="1"/>
        <end status="unknown"/>
    </location>
</feature>
<feature type="chain" id="PRO_0000030335" description="Probable peptide chain release factor 1, mitochondrial">
    <location>
        <begin status="unknown"/>
        <end position="389"/>
    </location>
</feature>
<feature type="modified residue" description="N5-methylglutamine" evidence="1">
    <location>
        <position position="259"/>
    </location>
</feature>
<gene>
    <name evidence="4" type="primary">mtrf-1L</name>
    <name evidence="4" type="ORF">W03F8.3</name>
</gene>
<sequence length="389" mass="43494">MLKRHQQLLFRLIRQSVLHQSSPTSSSASSTLLNSENGEKFVKTVVDRLAQCQAGNATAAPEQISYWESISKQSAKVSDGRSELSQLRTIINDPKETEEMRKLAEVDVESIEENLETELQELAVKIVPLNNLDVLSKCQIELSCGAGGQEAMLFTGELLDMYQKLAAVNSWKWDPLQVDNVPLGGVRSALIAVSGEKVYAKMRFEAGVHRVQRVPVNDSRMHTSTASISVLPEPEEVSVVVPSDSVKIEAMRASGPGGQNVNKRSTAVRMTHKETGIAVHCMDERFQHLNIQIAYKRLAAILMQKQVDAMLEKIVSKRKLQVGSKARAEKIRTYNFQHDRVTDHRIQMSITGVAEFLSAGETLQTMIERLQEQHLEDRLDHIIENCIVE</sequence>
<name>RF1M_CAEEL</name>
<protein>
    <recommendedName>
        <fullName evidence="3">Probable peptide chain release factor 1, mitochondrial</fullName>
        <shortName>MRF-1</shortName>
        <shortName>MtRF-1</shortName>
    </recommendedName>
    <alternativeName>
        <fullName evidence="4">Mitochondrial Translational Release Factor 1 like</fullName>
    </alternativeName>
</protein>